<comment type="function">
    <text evidence="2">Involved in oxygen transport from gills to the various peripheral tissues.</text>
</comment>
<comment type="subunit">
    <text evidence="2">Hb 2 is a heterotetramer of two alpha-2 and two beta-2 chains.</text>
</comment>
<comment type="tissue specificity">
    <text>Red blood cells.</text>
</comment>
<comment type="similarity">
    <text evidence="1">Belongs to the globin family.</text>
</comment>
<feature type="initiator methionine" description="Removed" evidence="2">
    <location>
        <position position="1"/>
    </location>
</feature>
<feature type="chain" id="PRO_0000052637" description="Hemoglobin subunit alpha-2">
    <location>
        <begin position="2"/>
        <end position="143"/>
    </location>
</feature>
<feature type="domain" description="Globin" evidence="1">
    <location>
        <begin position="2"/>
        <end position="143"/>
    </location>
</feature>
<feature type="binding site" evidence="1">
    <location>
        <position position="60"/>
    </location>
    <ligand>
        <name>O2</name>
        <dbReference type="ChEBI" id="CHEBI:15379"/>
    </ligand>
</feature>
<feature type="binding site" description="proximal binding residue" evidence="1">
    <location>
        <position position="89"/>
    </location>
    <ligand>
        <name>heme b</name>
        <dbReference type="ChEBI" id="CHEBI:60344"/>
    </ligand>
    <ligandPart>
        <name>Fe</name>
        <dbReference type="ChEBI" id="CHEBI:18248"/>
    </ligandPart>
</feature>
<feature type="modified residue" description="N-acetylserine" evidence="2">
    <location>
        <position position="2"/>
    </location>
</feature>
<feature type="helix" evidence="3">
    <location>
        <begin position="5"/>
        <end position="17"/>
    </location>
</feature>
<feature type="helix" evidence="3">
    <location>
        <begin position="18"/>
        <end position="21"/>
    </location>
</feature>
<feature type="helix" evidence="3">
    <location>
        <begin position="22"/>
        <end position="36"/>
    </location>
</feature>
<feature type="helix" evidence="3">
    <location>
        <begin position="38"/>
        <end position="44"/>
    </location>
</feature>
<feature type="helix" evidence="3">
    <location>
        <begin position="55"/>
        <end position="73"/>
    </location>
</feature>
<feature type="turn" evidence="3">
    <location>
        <begin position="74"/>
        <end position="76"/>
    </location>
</feature>
<feature type="helix" evidence="3">
    <location>
        <begin position="78"/>
        <end position="81"/>
    </location>
</feature>
<feature type="helix" evidence="3">
    <location>
        <begin position="83"/>
        <end position="90"/>
    </location>
</feature>
<feature type="helix" evidence="3">
    <location>
        <begin position="97"/>
        <end position="99"/>
    </location>
</feature>
<feature type="helix" evidence="3">
    <location>
        <begin position="100"/>
        <end position="114"/>
    </location>
</feature>
<feature type="turn" evidence="3">
    <location>
        <begin position="116"/>
        <end position="118"/>
    </location>
</feature>
<feature type="helix" evidence="3">
    <location>
        <begin position="121"/>
        <end position="139"/>
    </location>
</feature>
<sequence length="143" mass="15784">MSLSSKQKATVKDFFSKMSTRSDDIGAEALSRLVAVYPQTKSYFSHWKDASPGSAPVRKHGITTMGGVYDAVGKIDDLKGGLLSLSELHAFMLRVDPVNFKLLAHCMLVCMSMIFPEEFTPQVHVAVDKFLAQLALALAEKYR</sequence>
<gene>
    <name type="primary">hba2</name>
    <name type="synonym">hba</name>
</gene>
<evidence type="ECO:0000255" key="1">
    <source>
        <dbReference type="PROSITE-ProRule" id="PRU00238"/>
    </source>
</evidence>
<evidence type="ECO:0000269" key="2">
    <source>
    </source>
</evidence>
<evidence type="ECO:0007829" key="3">
    <source>
        <dbReference type="PDB" id="6HIT"/>
    </source>
</evidence>
<protein>
    <recommendedName>
        <fullName>Hemoglobin subunit alpha-2</fullName>
    </recommendedName>
    <alternativeName>
        <fullName>Alpha-2-globin</fullName>
    </alternativeName>
    <alternativeName>
        <fullName>Hemoglobin alpha-2 chain</fullName>
    </alternativeName>
</protein>
<dbReference type="EMBL" id="X98195">
    <property type="protein sequence ID" value="CAA66866.1"/>
    <property type="molecule type" value="mRNA"/>
</dbReference>
<dbReference type="PDB" id="6HIT">
    <property type="method" value="X-ray"/>
    <property type="resolution" value="2.50 A"/>
    <property type="chains" value="A/C/E/G=2-143"/>
</dbReference>
<dbReference type="PDBsum" id="6HIT"/>
<dbReference type="SMR" id="O42425"/>
<dbReference type="STRING" id="8049.ENSGMOP00000006057"/>
<dbReference type="iPTMnet" id="O42425"/>
<dbReference type="Proteomes" id="UP000694546">
    <property type="component" value="Unplaced"/>
</dbReference>
<dbReference type="GO" id="GO:0072562">
    <property type="term" value="C:blood microparticle"/>
    <property type="evidence" value="ECO:0007669"/>
    <property type="project" value="TreeGrafter"/>
</dbReference>
<dbReference type="GO" id="GO:0031838">
    <property type="term" value="C:haptoglobin-hemoglobin complex"/>
    <property type="evidence" value="ECO:0007669"/>
    <property type="project" value="TreeGrafter"/>
</dbReference>
<dbReference type="GO" id="GO:0005833">
    <property type="term" value="C:hemoglobin complex"/>
    <property type="evidence" value="ECO:0007669"/>
    <property type="project" value="InterPro"/>
</dbReference>
<dbReference type="GO" id="GO:0031720">
    <property type="term" value="F:haptoglobin binding"/>
    <property type="evidence" value="ECO:0007669"/>
    <property type="project" value="TreeGrafter"/>
</dbReference>
<dbReference type="GO" id="GO:0020037">
    <property type="term" value="F:heme binding"/>
    <property type="evidence" value="ECO:0007669"/>
    <property type="project" value="InterPro"/>
</dbReference>
<dbReference type="GO" id="GO:0005506">
    <property type="term" value="F:iron ion binding"/>
    <property type="evidence" value="ECO:0007669"/>
    <property type="project" value="InterPro"/>
</dbReference>
<dbReference type="GO" id="GO:0043177">
    <property type="term" value="F:organic acid binding"/>
    <property type="evidence" value="ECO:0007669"/>
    <property type="project" value="TreeGrafter"/>
</dbReference>
<dbReference type="GO" id="GO:0019825">
    <property type="term" value="F:oxygen binding"/>
    <property type="evidence" value="ECO:0007669"/>
    <property type="project" value="InterPro"/>
</dbReference>
<dbReference type="GO" id="GO:0005344">
    <property type="term" value="F:oxygen carrier activity"/>
    <property type="evidence" value="ECO:0007669"/>
    <property type="project" value="UniProtKB-KW"/>
</dbReference>
<dbReference type="GO" id="GO:0004601">
    <property type="term" value="F:peroxidase activity"/>
    <property type="evidence" value="ECO:0007669"/>
    <property type="project" value="TreeGrafter"/>
</dbReference>
<dbReference type="GO" id="GO:0042744">
    <property type="term" value="P:hydrogen peroxide catabolic process"/>
    <property type="evidence" value="ECO:0007669"/>
    <property type="project" value="TreeGrafter"/>
</dbReference>
<dbReference type="CDD" id="cd08927">
    <property type="entry name" value="Hb-alpha-like"/>
    <property type="match status" value="1"/>
</dbReference>
<dbReference type="FunFam" id="1.10.490.10:FF:000002">
    <property type="entry name" value="Hemoglobin subunit alpha"/>
    <property type="match status" value="1"/>
</dbReference>
<dbReference type="Gene3D" id="1.10.490.10">
    <property type="entry name" value="Globins"/>
    <property type="match status" value="1"/>
</dbReference>
<dbReference type="InterPro" id="IPR000971">
    <property type="entry name" value="Globin"/>
</dbReference>
<dbReference type="InterPro" id="IPR009050">
    <property type="entry name" value="Globin-like_sf"/>
</dbReference>
<dbReference type="InterPro" id="IPR012292">
    <property type="entry name" value="Globin/Proto"/>
</dbReference>
<dbReference type="InterPro" id="IPR002338">
    <property type="entry name" value="Hemoglobin_a-typ"/>
</dbReference>
<dbReference type="InterPro" id="IPR050056">
    <property type="entry name" value="Hemoglobin_oxygen_transport"/>
</dbReference>
<dbReference type="InterPro" id="IPR002339">
    <property type="entry name" value="Hemoglobin_pi"/>
</dbReference>
<dbReference type="PANTHER" id="PTHR11442">
    <property type="entry name" value="HEMOGLOBIN FAMILY MEMBER"/>
    <property type="match status" value="1"/>
</dbReference>
<dbReference type="PANTHER" id="PTHR11442:SF41">
    <property type="entry name" value="HEMOGLOBIN SUBUNIT ZETA"/>
    <property type="match status" value="1"/>
</dbReference>
<dbReference type="Pfam" id="PF00042">
    <property type="entry name" value="Globin"/>
    <property type="match status" value="1"/>
</dbReference>
<dbReference type="PRINTS" id="PR00612">
    <property type="entry name" value="ALPHAHAEM"/>
</dbReference>
<dbReference type="PRINTS" id="PR00815">
    <property type="entry name" value="PIHAEM"/>
</dbReference>
<dbReference type="SUPFAM" id="SSF46458">
    <property type="entry name" value="Globin-like"/>
    <property type="match status" value="1"/>
</dbReference>
<dbReference type="PROSITE" id="PS01033">
    <property type="entry name" value="GLOBIN"/>
    <property type="match status" value="1"/>
</dbReference>
<reference key="1">
    <citation type="submission" date="1996-05" db="EMBL/GenBank/DDBJ databases">
        <title>Molecular genetic indicators of selection in haemoglobin encoding loci of the Atlantic cod, Gadus morhua.</title>
        <authorList>
            <person name="Tipping D.R."/>
            <person name="Birley A.J."/>
        </authorList>
    </citation>
    <scope>NUCLEOTIDE SEQUENCE [MRNA]</scope>
    <source>
        <tissue>Blood</tissue>
    </source>
</reference>
<reference key="2">
    <citation type="journal article" date="2006" name="J. Biol. Chem.">
        <title>The oxygen transport system in three species of the boreal fish family Gadidae. Molecular phylogeny of hemoglobin.</title>
        <authorList>
            <person name="Verde C."/>
            <person name="Balestrieri M."/>
            <person name="de Pascale D."/>
            <person name="Pagnozzi D."/>
            <person name="Lecointre G."/>
            <person name="di Prisco G."/>
        </authorList>
    </citation>
    <scope>PROTEIN SEQUENCE OF 2-143</scope>
    <scope>FUNCTION</scope>
    <scope>SUBUNIT</scope>
    <scope>ACETYLATION AT SER-2</scope>
    <source>
        <tissue>Blood</tissue>
    </source>
</reference>
<keyword id="KW-0002">3D-structure</keyword>
<keyword id="KW-0007">Acetylation</keyword>
<keyword id="KW-0903">Direct protein sequencing</keyword>
<keyword id="KW-0349">Heme</keyword>
<keyword id="KW-0408">Iron</keyword>
<keyword id="KW-0479">Metal-binding</keyword>
<keyword id="KW-0561">Oxygen transport</keyword>
<keyword id="KW-1185">Reference proteome</keyword>
<keyword id="KW-0813">Transport</keyword>
<accession>O42425</accession>
<name>HBA2_GADMO</name>
<proteinExistence type="evidence at protein level"/>
<organism>
    <name type="scientific">Gadus morhua</name>
    <name type="common">Atlantic cod</name>
    <dbReference type="NCBI Taxonomy" id="8049"/>
    <lineage>
        <taxon>Eukaryota</taxon>
        <taxon>Metazoa</taxon>
        <taxon>Chordata</taxon>
        <taxon>Craniata</taxon>
        <taxon>Vertebrata</taxon>
        <taxon>Euteleostomi</taxon>
        <taxon>Actinopterygii</taxon>
        <taxon>Neopterygii</taxon>
        <taxon>Teleostei</taxon>
        <taxon>Neoteleostei</taxon>
        <taxon>Acanthomorphata</taxon>
        <taxon>Zeiogadaria</taxon>
        <taxon>Gadariae</taxon>
        <taxon>Gadiformes</taxon>
        <taxon>Gadoidei</taxon>
        <taxon>Gadidae</taxon>
        <taxon>Gadus</taxon>
    </lineage>
</organism>